<evidence type="ECO:0000255" key="1">
    <source>
        <dbReference type="HAMAP-Rule" id="MF_00137"/>
    </source>
</evidence>
<feature type="chain" id="PRO_1000096013" description="Phosphoribosylaminoimidazole-succinocarboxamide synthase">
    <location>
        <begin position="1"/>
        <end position="237"/>
    </location>
</feature>
<dbReference type="EC" id="6.3.2.6" evidence="1"/>
<dbReference type="EMBL" id="CP001113">
    <property type="protein sequence ID" value="ACF65101.1"/>
    <property type="molecule type" value="Genomic_DNA"/>
</dbReference>
<dbReference type="RefSeq" id="WP_001171630.1">
    <property type="nucleotide sequence ID" value="NZ_CCMR01000001.1"/>
</dbReference>
<dbReference type="SMR" id="B4T0L4"/>
<dbReference type="KEGG" id="see:SNSL254_A2680"/>
<dbReference type="HOGENOM" id="CLU_061495_2_1_6"/>
<dbReference type="UniPathway" id="UPA00074">
    <property type="reaction ID" value="UER00131"/>
</dbReference>
<dbReference type="Proteomes" id="UP000008824">
    <property type="component" value="Chromosome"/>
</dbReference>
<dbReference type="GO" id="GO:0005829">
    <property type="term" value="C:cytosol"/>
    <property type="evidence" value="ECO:0007669"/>
    <property type="project" value="TreeGrafter"/>
</dbReference>
<dbReference type="GO" id="GO:0005524">
    <property type="term" value="F:ATP binding"/>
    <property type="evidence" value="ECO:0007669"/>
    <property type="project" value="UniProtKB-KW"/>
</dbReference>
<dbReference type="GO" id="GO:0004639">
    <property type="term" value="F:phosphoribosylaminoimidazolesuccinocarboxamide synthase activity"/>
    <property type="evidence" value="ECO:0007669"/>
    <property type="project" value="UniProtKB-UniRule"/>
</dbReference>
<dbReference type="GO" id="GO:0006189">
    <property type="term" value="P:'de novo' IMP biosynthetic process"/>
    <property type="evidence" value="ECO:0007669"/>
    <property type="project" value="UniProtKB-UniRule"/>
</dbReference>
<dbReference type="GO" id="GO:0009236">
    <property type="term" value="P:cobalamin biosynthetic process"/>
    <property type="evidence" value="ECO:0007669"/>
    <property type="project" value="InterPro"/>
</dbReference>
<dbReference type="CDD" id="cd01415">
    <property type="entry name" value="SAICAR_synt_PurC"/>
    <property type="match status" value="1"/>
</dbReference>
<dbReference type="FunFam" id="3.30.200.20:FF:000086">
    <property type="entry name" value="Phosphoribosylaminoimidazole-succinocarboxamide synthase"/>
    <property type="match status" value="1"/>
</dbReference>
<dbReference type="FunFam" id="3.30.470.20:FF:000006">
    <property type="entry name" value="Phosphoribosylaminoimidazole-succinocarboxamide synthase"/>
    <property type="match status" value="1"/>
</dbReference>
<dbReference type="Gene3D" id="3.30.470.20">
    <property type="entry name" value="ATP-grasp fold, B domain"/>
    <property type="match status" value="1"/>
</dbReference>
<dbReference type="Gene3D" id="3.30.200.20">
    <property type="entry name" value="Phosphorylase Kinase, domain 1"/>
    <property type="match status" value="1"/>
</dbReference>
<dbReference type="HAMAP" id="MF_00137">
    <property type="entry name" value="SAICAR_synth"/>
    <property type="match status" value="1"/>
</dbReference>
<dbReference type="InterPro" id="IPR028923">
    <property type="entry name" value="SAICAR_synt/ADE2_N"/>
</dbReference>
<dbReference type="InterPro" id="IPR033934">
    <property type="entry name" value="SAICAR_synt_PurC"/>
</dbReference>
<dbReference type="InterPro" id="IPR001636">
    <property type="entry name" value="SAICAR_synth"/>
</dbReference>
<dbReference type="InterPro" id="IPR050089">
    <property type="entry name" value="SAICAR_synthetase"/>
</dbReference>
<dbReference type="InterPro" id="IPR018236">
    <property type="entry name" value="SAICAR_synthetase_CS"/>
</dbReference>
<dbReference type="NCBIfam" id="TIGR00081">
    <property type="entry name" value="purC"/>
    <property type="match status" value="1"/>
</dbReference>
<dbReference type="PANTHER" id="PTHR43599">
    <property type="entry name" value="MULTIFUNCTIONAL PROTEIN ADE2"/>
    <property type="match status" value="1"/>
</dbReference>
<dbReference type="PANTHER" id="PTHR43599:SF3">
    <property type="entry name" value="SI:DKEY-6E2.2"/>
    <property type="match status" value="1"/>
</dbReference>
<dbReference type="Pfam" id="PF01259">
    <property type="entry name" value="SAICAR_synt"/>
    <property type="match status" value="1"/>
</dbReference>
<dbReference type="SUPFAM" id="SSF56104">
    <property type="entry name" value="SAICAR synthase-like"/>
    <property type="match status" value="1"/>
</dbReference>
<dbReference type="PROSITE" id="PS01057">
    <property type="entry name" value="SAICAR_SYNTHETASE_1"/>
    <property type="match status" value="1"/>
</dbReference>
<dbReference type="PROSITE" id="PS01058">
    <property type="entry name" value="SAICAR_SYNTHETASE_2"/>
    <property type="match status" value="1"/>
</dbReference>
<keyword id="KW-0067">ATP-binding</keyword>
<keyword id="KW-0436">Ligase</keyword>
<keyword id="KW-0547">Nucleotide-binding</keyword>
<keyword id="KW-0658">Purine biosynthesis</keyword>
<gene>
    <name evidence="1" type="primary">purC</name>
    <name type="ordered locus">SNSL254_A2680</name>
</gene>
<accession>B4T0L4</accession>
<name>PUR7_SALNS</name>
<reference key="1">
    <citation type="journal article" date="2011" name="J. Bacteriol.">
        <title>Comparative genomics of 28 Salmonella enterica isolates: evidence for CRISPR-mediated adaptive sublineage evolution.</title>
        <authorList>
            <person name="Fricke W.F."/>
            <person name="Mammel M.K."/>
            <person name="McDermott P.F."/>
            <person name="Tartera C."/>
            <person name="White D.G."/>
            <person name="Leclerc J.E."/>
            <person name="Ravel J."/>
            <person name="Cebula T.A."/>
        </authorList>
    </citation>
    <scope>NUCLEOTIDE SEQUENCE [LARGE SCALE GENOMIC DNA]</scope>
    <source>
        <strain>SL254</strain>
    </source>
</reference>
<protein>
    <recommendedName>
        <fullName evidence="1">Phosphoribosylaminoimidazole-succinocarboxamide synthase</fullName>
        <ecNumber evidence="1">6.3.2.6</ecNumber>
    </recommendedName>
    <alternativeName>
        <fullName evidence="1">SAICAR synthetase</fullName>
    </alternativeName>
</protein>
<sequence>MQKQAELYRGKAKTVYSTENPDLLVLEFRNDTSAGDGARIEQFDRKGMVNNKFNHFIMTKLAEAGIPTQMERLLSDTECLVKKLEMVPVECVVRNRAAGSLVKRLGVEEGMELNPPIFDLFLKNDALHDPMVNSSYCETFGWVSQENLARMKELTYKANDVLKKLFDDAGLILVDFKLEFGLYKGEVVLGDEFSPDGSRLWDKETLDKMDKDRFRQSLGGLIEAYEAVAHRLGVKLD</sequence>
<proteinExistence type="inferred from homology"/>
<comment type="catalytic activity">
    <reaction evidence="1">
        <text>5-amino-1-(5-phospho-D-ribosyl)imidazole-4-carboxylate + L-aspartate + ATP = (2S)-2-[5-amino-1-(5-phospho-beta-D-ribosyl)imidazole-4-carboxamido]succinate + ADP + phosphate + 2 H(+)</text>
        <dbReference type="Rhea" id="RHEA:22628"/>
        <dbReference type="ChEBI" id="CHEBI:15378"/>
        <dbReference type="ChEBI" id="CHEBI:29991"/>
        <dbReference type="ChEBI" id="CHEBI:30616"/>
        <dbReference type="ChEBI" id="CHEBI:43474"/>
        <dbReference type="ChEBI" id="CHEBI:58443"/>
        <dbReference type="ChEBI" id="CHEBI:77657"/>
        <dbReference type="ChEBI" id="CHEBI:456216"/>
        <dbReference type="EC" id="6.3.2.6"/>
    </reaction>
</comment>
<comment type="pathway">
    <text evidence="1">Purine metabolism; IMP biosynthesis via de novo pathway; 5-amino-1-(5-phospho-D-ribosyl)imidazole-4-carboxamide from 5-amino-1-(5-phospho-D-ribosyl)imidazole-4-carboxylate: step 1/2.</text>
</comment>
<comment type="similarity">
    <text evidence="1">Belongs to the SAICAR synthetase family.</text>
</comment>
<organism>
    <name type="scientific">Salmonella newport (strain SL254)</name>
    <dbReference type="NCBI Taxonomy" id="423368"/>
    <lineage>
        <taxon>Bacteria</taxon>
        <taxon>Pseudomonadati</taxon>
        <taxon>Pseudomonadota</taxon>
        <taxon>Gammaproteobacteria</taxon>
        <taxon>Enterobacterales</taxon>
        <taxon>Enterobacteriaceae</taxon>
        <taxon>Salmonella</taxon>
    </lineage>
</organism>